<reference key="1">
    <citation type="journal article" date="2005" name="Proc. Natl. Acad. Sci. U.S.A.">
        <title>The complete genome sequence of Mycobacterium avium subspecies paratuberculosis.</title>
        <authorList>
            <person name="Li L."/>
            <person name="Bannantine J.P."/>
            <person name="Zhang Q."/>
            <person name="Amonsin A."/>
            <person name="May B.J."/>
            <person name="Alt D."/>
            <person name="Banerji N."/>
            <person name="Kanjilal S."/>
            <person name="Kapur V."/>
        </authorList>
    </citation>
    <scope>NUCLEOTIDE SEQUENCE [LARGE SCALE GENOMIC DNA]</scope>
    <source>
        <strain>ATCC BAA-968 / K-10</strain>
    </source>
</reference>
<protein>
    <recommendedName>
        <fullName evidence="1">Mycobacterial beta-ketoacyl-[acyl-carrier-protein] synthase III</fullName>
        <shortName evidence="1">Beta-ketoacyl-ACP synthase III</shortName>
        <shortName evidence="1">KAS III</shortName>
        <ecNumber evidence="1">2.3.1.301</ecNumber>
    </recommendedName>
    <alternativeName>
        <fullName evidence="1">3-oxoacyl-[acyl-carrier-protein] synthase 3</fullName>
    </alternativeName>
    <alternativeName>
        <fullName evidence="1">3-oxoacyl-[acyl-carrier-protein] synthase III</fullName>
    </alternativeName>
</protein>
<feature type="chain" id="PRO_0000110442" description="Mycobacterial beta-ketoacyl-[acyl-carrier-protein] synthase III">
    <location>
        <begin position="1"/>
        <end position="335"/>
    </location>
</feature>
<feature type="region of interest" description="ACP-binding" evidence="1">
    <location>
        <begin position="259"/>
        <end position="263"/>
    </location>
</feature>
<feature type="active site" evidence="1">
    <location>
        <position position="122"/>
    </location>
</feature>
<feature type="active site" evidence="1">
    <location>
        <position position="258"/>
    </location>
</feature>
<feature type="active site" evidence="1">
    <location>
        <position position="289"/>
    </location>
</feature>
<gene>
    <name evidence="1" type="primary">fabH</name>
    <name type="ordered locus">MAP_4028c</name>
</gene>
<name>FABH_MYCPA</name>
<comment type="function">
    <text evidence="1">Catalyzes the condensation reaction of fatty acid synthesis by the addition to an acyl acceptor of two carbons from malonyl-ACP. Catalyzes the first condensation reaction which initiates fatty acid synthesis and may therefore play a role in governing the total rate of fatty acid production. Possesses both acetoacetyl-ACP synthase and acetyl transacylase activities. Its substrate specificity determines the biosynthesis of branched-chain and/or straight-chain of fatty acids.</text>
</comment>
<comment type="catalytic activity">
    <reaction evidence="1">
        <text>malonyl-[ACP] + dodecanoyl-CoA + H(+) = 3-oxotetradecanoyl-[ACP] + CO2 + CoA</text>
        <dbReference type="Rhea" id="RHEA:43640"/>
        <dbReference type="Rhea" id="RHEA-COMP:9623"/>
        <dbReference type="Rhea" id="RHEA-COMP:9645"/>
        <dbReference type="ChEBI" id="CHEBI:15378"/>
        <dbReference type="ChEBI" id="CHEBI:16526"/>
        <dbReference type="ChEBI" id="CHEBI:57287"/>
        <dbReference type="ChEBI" id="CHEBI:57375"/>
        <dbReference type="ChEBI" id="CHEBI:78449"/>
        <dbReference type="ChEBI" id="CHEBI:78473"/>
        <dbReference type="EC" id="2.3.1.301"/>
    </reaction>
    <physiologicalReaction direction="left-to-right" evidence="1">
        <dbReference type="Rhea" id="RHEA:43641"/>
    </physiologicalReaction>
</comment>
<comment type="pathway">
    <text evidence="1">Lipid metabolism; fatty acid biosynthesis.</text>
</comment>
<comment type="pathway">
    <text evidence="1">Lipid metabolism; mycolic acid biosynthesis.</text>
</comment>
<comment type="subunit">
    <text evidence="1">Homodimer.</text>
</comment>
<comment type="subcellular location">
    <subcellularLocation>
        <location evidence="1">Cytoplasm</location>
    </subcellularLocation>
</comment>
<comment type="domain">
    <text evidence="1">The last Arg residue of the ACP-binding site is essential for the weak association between ACP/AcpP and FabH.</text>
</comment>
<comment type="similarity">
    <text evidence="1">Belongs to the thiolase-like superfamily. FabH family.</text>
</comment>
<evidence type="ECO:0000255" key="1">
    <source>
        <dbReference type="HAMAP-Rule" id="MF_01815"/>
    </source>
</evidence>
<accession>Q73SP5</accession>
<dbReference type="EC" id="2.3.1.301" evidence="1"/>
<dbReference type="EMBL" id="AE016958">
    <property type="protein sequence ID" value="AAS06578.1"/>
    <property type="molecule type" value="Genomic_DNA"/>
</dbReference>
<dbReference type="RefSeq" id="WP_003879334.1">
    <property type="nucleotide sequence ID" value="NZ_CP106873.1"/>
</dbReference>
<dbReference type="SMR" id="Q73SP5"/>
<dbReference type="STRING" id="262316.MAP_4028c"/>
<dbReference type="KEGG" id="mpa:MAP_4028c"/>
<dbReference type="PATRIC" id="fig|262316.17.peg.4290"/>
<dbReference type="eggNOG" id="COG0332">
    <property type="taxonomic scope" value="Bacteria"/>
</dbReference>
<dbReference type="HOGENOM" id="CLU_039592_4_0_11"/>
<dbReference type="UniPathway" id="UPA00094"/>
<dbReference type="UniPathway" id="UPA00915"/>
<dbReference type="Proteomes" id="UP000000580">
    <property type="component" value="Chromosome"/>
</dbReference>
<dbReference type="GO" id="GO:0005737">
    <property type="term" value="C:cytoplasm"/>
    <property type="evidence" value="ECO:0007669"/>
    <property type="project" value="UniProtKB-SubCell"/>
</dbReference>
<dbReference type="GO" id="GO:0004315">
    <property type="term" value="F:3-oxoacyl-[acyl-carrier-protein] synthase activity"/>
    <property type="evidence" value="ECO:0007669"/>
    <property type="project" value="InterPro"/>
</dbReference>
<dbReference type="GO" id="GO:0033818">
    <property type="term" value="F:beta-ketoacyl-acyl-carrier-protein synthase III activity"/>
    <property type="evidence" value="ECO:0007669"/>
    <property type="project" value="UniProtKB-UniRule"/>
</dbReference>
<dbReference type="GO" id="GO:0006633">
    <property type="term" value="P:fatty acid biosynthetic process"/>
    <property type="evidence" value="ECO:0007669"/>
    <property type="project" value="UniProtKB-UniRule"/>
</dbReference>
<dbReference type="CDD" id="cd00830">
    <property type="entry name" value="KAS_III"/>
    <property type="match status" value="1"/>
</dbReference>
<dbReference type="FunFam" id="3.40.47.10:FF:000076">
    <property type="entry name" value="3-oxoacyl-[acyl-carrier-protein] synthase 3"/>
    <property type="match status" value="1"/>
</dbReference>
<dbReference type="Gene3D" id="3.40.47.10">
    <property type="match status" value="2"/>
</dbReference>
<dbReference type="HAMAP" id="MF_01815">
    <property type="entry name" value="FabH"/>
    <property type="match status" value="1"/>
</dbReference>
<dbReference type="InterPro" id="IPR013747">
    <property type="entry name" value="ACP_syn_III_C"/>
</dbReference>
<dbReference type="InterPro" id="IPR013751">
    <property type="entry name" value="ACP_syn_III_N"/>
</dbReference>
<dbReference type="InterPro" id="IPR004655">
    <property type="entry name" value="FabH"/>
</dbReference>
<dbReference type="InterPro" id="IPR016039">
    <property type="entry name" value="Thiolase-like"/>
</dbReference>
<dbReference type="NCBIfam" id="TIGR00747">
    <property type="entry name" value="fabH"/>
    <property type="match status" value="1"/>
</dbReference>
<dbReference type="NCBIfam" id="NF006829">
    <property type="entry name" value="PRK09352.1"/>
    <property type="match status" value="1"/>
</dbReference>
<dbReference type="PANTHER" id="PTHR43091">
    <property type="entry name" value="3-OXOACYL-[ACYL-CARRIER-PROTEIN] SYNTHASE"/>
    <property type="match status" value="1"/>
</dbReference>
<dbReference type="PANTHER" id="PTHR43091:SF1">
    <property type="entry name" value="BETA-KETOACYL-[ACYL-CARRIER-PROTEIN] SYNTHASE III, CHLOROPLASTIC"/>
    <property type="match status" value="1"/>
</dbReference>
<dbReference type="Pfam" id="PF08545">
    <property type="entry name" value="ACP_syn_III"/>
    <property type="match status" value="1"/>
</dbReference>
<dbReference type="Pfam" id="PF08541">
    <property type="entry name" value="ACP_syn_III_C"/>
    <property type="match status" value="1"/>
</dbReference>
<dbReference type="SUPFAM" id="SSF53901">
    <property type="entry name" value="Thiolase-like"/>
    <property type="match status" value="1"/>
</dbReference>
<sequence length="335" mass="34747">MKQIAATSGPTNIGLLSVGSYRPQRVVTNDELCQNIDSSDEWIYSRTGIKTRRFAARDESTASMATEAGREAIAKAGLEASDIDCVVVATSTHFLQTPACGPAVAAALGATGVPAFDISAGCAGFGYALGVAADMVRGGTAGKVLVLGSEKLSPTVDMTDRSNCFIFADGAAGVVVGETPTQGIGPTVWGSDGTQATAIRQDIDWMDYLDRPTGPRPFLRLEGSAVFRWAAFEMGKVGQQAMDAAGVRPDEIDVFLPHQANSRINEILAKSLELRPDAVIANDIEHTGNTSAASIPLAMAEVLATGAAKAGDLALLIGYGAGLSYTAQVVRLPPG</sequence>
<proteinExistence type="inferred from homology"/>
<keyword id="KW-0012">Acyltransferase</keyword>
<keyword id="KW-0963">Cytoplasm</keyword>
<keyword id="KW-0275">Fatty acid biosynthesis</keyword>
<keyword id="KW-0276">Fatty acid metabolism</keyword>
<keyword id="KW-0444">Lipid biosynthesis</keyword>
<keyword id="KW-0443">Lipid metabolism</keyword>
<keyword id="KW-0511">Multifunctional enzyme</keyword>
<keyword id="KW-1185">Reference proteome</keyword>
<keyword id="KW-0808">Transferase</keyword>
<organism>
    <name type="scientific">Mycolicibacterium paratuberculosis (strain ATCC BAA-968 / K-10)</name>
    <name type="common">Mycobacterium paratuberculosis</name>
    <dbReference type="NCBI Taxonomy" id="262316"/>
    <lineage>
        <taxon>Bacteria</taxon>
        <taxon>Bacillati</taxon>
        <taxon>Actinomycetota</taxon>
        <taxon>Actinomycetes</taxon>
        <taxon>Mycobacteriales</taxon>
        <taxon>Mycobacteriaceae</taxon>
        <taxon>Mycobacterium</taxon>
        <taxon>Mycobacterium avium complex (MAC)</taxon>
    </lineage>
</organism>